<gene>
    <name type="primary">png1</name>
    <name type="ORF">SPAC3G9.08</name>
</gene>
<reference key="1">
    <citation type="journal article" date="2002" name="Nature">
        <title>The genome sequence of Schizosaccharomyces pombe.</title>
        <authorList>
            <person name="Wood V."/>
            <person name="Gwilliam R."/>
            <person name="Rajandream M.A."/>
            <person name="Lyne M.H."/>
            <person name="Lyne R."/>
            <person name="Stewart A."/>
            <person name="Sgouros J.G."/>
            <person name="Peat N."/>
            <person name="Hayles J."/>
            <person name="Baker S.G."/>
            <person name="Basham D."/>
            <person name="Bowman S."/>
            <person name="Brooks K."/>
            <person name="Brown D."/>
            <person name="Brown S."/>
            <person name="Chillingworth T."/>
            <person name="Churcher C.M."/>
            <person name="Collins M."/>
            <person name="Connor R."/>
            <person name="Cronin A."/>
            <person name="Davis P."/>
            <person name="Feltwell T."/>
            <person name="Fraser A."/>
            <person name="Gentles S."/>
            <person name="Goble A."/>
            <person name="Hamlin N."/>
            <person name="Harris D.E."/>
            <person name="Hidalgo J."/>
            <person name="Hodgson G."/>
            <person name="Holroyd S."/>
            <person name="Hornsby T."/>
            <person name="Howarth S."/>
            <person name="Huckle E.J."/>
            <person name="Hunt S."/>
            <person name="Jagels K."/>
            <person name="James K.D."/>
            <person name="Jones L."/>
            <person name="Jones M."/>
            <person name="Leather S."/>
            <person name="McDonald S."/>
            <person name="McLean J."/>
            <person name="Mooney P."/>
            <person name="Moule S."/>
            <person name="Mungall K.L."/>
            <person name="Murphy L.D."/>
            <person name="Niblett D."/>
            <person name="Odell C."/>
            <person name="Oliver K."/>
            <person name="O'Neil S."/>
            <person name="Pearson D."/>
            <person name="Quail M.A."/>
            <person name="Rabbinowitsch E."/>
            <person name="Rutherford K.M."/>
            <person name="Rutter S."/>
            <person name="Saunders D."/>
            <person name="Seeger K."/>
            <person name="Sharp S."/>
            <person name="Skelton J."/>
            <person name="Simmonds M.N."/>
            <person name="Squares R."/>
            <person name="Squares S."/>
            <person name="Stevens K."/>
            <person name="Taylor K."/>
            <person name="Taylor R.G."/>
            <person name="Tivey A."/>
            <person name="Walsh S.V."/>
            <person name="Warren T."/>
            <person name="Whitehead S."/>
            <person name="Woodward J.R."/>
            <person name="Volckaert G."/>
            <person name="Aert R."/>
            <person name="Robben J."/>
            <person name="Grymonprez B."/>
            <person name="Weltjens I."/>
            <person name="Vanstreels E."/>
            <person name="Rieger M."/>
            <person name="Schaefer M."/>
            <person name="Mueller-Auer S."/>
            <person name="Gabel C."/>
            <person name="Fuchs M."/>
            <person name="Duesterhoeft A."/>
            <person name="Fritzc C."/>
            <person name="Holzer E."/>
            <person name="Moestl D."/>
            <person name="Hilbert H."/>
            <person name="Borzym K."/>
            <person name="Langer I."/>
            <person name="Beck A."/>
            <person name="Lehrach H."/>
            <person name="Reinhardt R."/>
            <person name="Pohl T.M."/>
            <person name="Eger P."/>
            <person name="Zimmermann W."/>
            <person name="Wedler H."/>
            <person name="Wambutt R."/>
            <person name="Purnelle B."/>
            <person name="Goffeau A."/>
            <person name="Cadieu E."/>
            <person name="Dreano S."/>
            <person name="Gloux S."/>
            <person name="Lelaure V."/>
            <person name="Mottier S."/>
            <person name="Galibert F."/>
            <person name="Aves S.J."/>
            <person name="Xiang Z."/>
            <person name="Hunt C."/>
            <person name="Moore K."/>
            <person name="Hurst S.M."/>
            <person name="Lucas M."/>
            <person name="Rochet M."/>
            <person name="Gaillardin C."/>
            <person name="Tallada V.A."/>
            <person name="Garzon A."/>
            <person name="Thode G."/>
            <person name="Daga R.R."/>
            <person name="Cruzado L."/>
            <person name="Jimenez J."/>
            <person name="Sanchez M."/>
            <person name="del Rey F."/>
            <person name="Benito J."/>
            <person name="Dominguez A."/>
            <person name="Revuelta J.L."/>
            <person name="Moreno S."/>
            <person name="Armstrong J."/>
            <person name="Forsburg S.L."/>
            <person name="Cerutti L."/>
            <person name="Lowe T."/>
            <person name="McCombie W.R."/>
            <person name="Paulsen I."/>
            <person name="Potashkin J."/>
            <person name="Shpakovski G.V."/>
            <person name="Ussery D."/>
            <person name="Barrell B.G."/>
            <person name="Nurse P."/>
        </authorList>
    </citation>
    <scope>NUCLEOTIDE SEQUENCE [LARGE SCALE GENOMIC DNA]</scope>
    <source>
        <strain>972 / ATCC 24843</strain>
    </source>
</reference>
<reference key="2">
    <citation type="journal article" date="2000" name="Mol. Cell. Biol.">
        <title>Three yeast proteins related to the human candidate tumor suppressor p33(ING1) are associated with histone acetyltransferase activities.</title>
        <authorList>
            <person name="Loewith R."/>
            <person name="Meijer M."/>
            <person name="Lees-Miller S.P."/>
            <person name="Riabowol K."/>
            <person name="Young D."/>
        </authorList>
    </citation>
    <scope>FUNCTION</scope>
</reference>
<evidence type="ECO:0000250" key="1"/>
<evidence type="ECO:0000250" key="2">
    <source>
        <dbReference type="UniProtKB" id="Q9UK53"/>
    </source>
</evidence>
<evidence type="ECO:0000255" key="3">
    <source>
        <dbReference type="PROSITE-ProRule" id="PRU00146"/>
    </source>
</evidence>
<evidence type="ECO:0000256" key="4">
    <source>
        <dbReference type="SAM" id="MobiDB-lite"/>
    </source>
</evidence>
<evidence type="ECO:0000269" key="5">
    <source>
    </source>
</evidence>
<evidence type="ECO:0000305" key="6"/>
<proteinExistence type="inferred from homology"/>
<organism>
    <name type="scientific">Schizosaccharomyces pombe (strain 972 / ATCC 24843)</name>
    <name type="common">Fission yeast</name>
    <dbReference type="NCBI Taxonomy" id="284812"/>
    <lineage>
        <taxon>Eukaryota</taxon>
        <taxon>Fungi</taxon>
        <taxon>Dikarya</taxon>
        <taxon>Ascomycota</taxon>
        <taxon>Taphrinomycotina</taxon>
        <taxon>Schizosaccharomycetes</taxon>
        <taxon>Schizosaccharomycetales</taxon>
        <taxon>Schizosaccharomycetaceae</taxon>
        <taxon>Schizosaccharomyces</taxon>
    </lineage>
</organism>
<name>ING1_SCHPO</name>
<keyword id="KW-0156">Chromatin regulator</keyword>
<keyword id="KW-0479">Metal-binding</keyword>
<keyword id="KW-0539">Nucleus</keyword>
<keyword id="KW-1185">Reference proteome</keyword>
<keyword id="KW-0804">Transcription</keyword>
<keyword id="KW-0805">Transcription regulation</keyword>
<keyword id="KW-0862">Zinc</keyword>
<keyword id="KW-0863">Zinc-finger</keyword>
<feature type="chain" id="PRO_0000362154" description="Chromatin modification-related protein png1">
    <location>
        <begin position="1"/>
        <end position="283"/>
    </location>
</feature>
<feature type="zinc finger region" description="PHD-type" evidence="3">
    <location>
        <begin position="228"/>
        <end position="277"/>
    </location>
</feature>
<feature type="region of interest" description="Disordered" evidence="4">
    <location>
        <begin position="137"/>
        <end position="224"/>
    </location>
</feature>
<feature type="compositionally biased region" description="Low complexity" evidence="4">
    <location>
        <begin position="137"/>
        <end position="171"/>
    </location>
</feature>
<feature type="compositionally biased region" description="Polar residues" evidence="4">
    <location>
        <begin position="181"/>
        <end position="216"/>
    </location>
</feature>
<feature type="binding site" evidence="2">
    <location>
        <position position="231"/>
    </location>
    <ligand>
        <name>Zn(2+)</name>
        <dbReference type="ChEBI" id="CHEBI:29105"/>
        <label>1</label>
    </ligand>
</feature>
<feature type="binding site" evidence="2">
    <location>
        <position position="233"/>
    </location>
    <ligand>
        <name>Zn(2+)</name>
        <dbReference type="ChEBI" id="CHEBI:29105"/>
        <label>1</label>
    </ligand>
</feature>
<feature type="binding site" evidence="2">
    <location>
        <position position="244"/>
    </location>
    <ligand>
        <name>Zn(2+)</name>
        <dbReference type="ChEBI" id="CHEBI:29105"/>
        <label>2</label>
    </ligand>
</feature>
<feature type="binding site" evidence="2">
    <location>
        <position position="249"/>
    </location>
    <ligand>
        <name>Zn(2+)</name>
        <dbReference type="ChEBI" id="CHEBI:29105"/>
        <label>2</label>
    </ligand>
</feature>
<feature type="binding site" evidence="2">
    <location>
        <position position="255"/>
    </location>
    <ligand>
        <name>Zn(2+)</name>
        <dbReference type="ChEBI" id="CHEBI:29105"/>
        <label>1</label>
    </ligand>
</feature>
<feature type="binding site" evidence="2">
    <location>
        <position position="258"/>
    </location>
    <ligand>
        <name>Zn(2+)</name>
        <dbReference type="ChEBI" id="CHEBI:29105"/>
        <label>1</label>
    </ligand>
</feature>
<feature type="binding site" evidence="2">
    <location>
        <position position="271"/>
    </location>
    <ligand>
        <name>Zn(2+)</name>
        <dbReference type="ChEBI" id="CHEBI:29105"/>
        <label>2</label>
    </ligand>
</feature>
<feature type="binding site" evidence="2">
    <location>
        <position position="274"/>
    </location>
    <ligand>
        <name>Zn(2+)</name>
        <dbReference type="ChEBI" id="CHEBI:29105"/>
        <label>2</label>
    </ligand>
</feature>
<feature type="site" description="Histone H3K4me3 binding" evidence="2">
    <location>
        <position position="230"/>
    </location>
</feature>
<feature type="site" description="Histone H3K4me3 binding" evidence="2">
    <location>
        <position position="241"/>
    </location>
</feature>
<feature type="site" description="Histone H3K4me3 binding" evidence="2">
    <location>
        <position position="245"/>
    </location>
</feature>
<feature type="site" description="Histone H3K4me3 binding" evidence="2">
    <location>
        <position position="253"/>
    </location>
</feature>
<sequence length="283" mass="31276">MADDTAYILSEYLQTLDNVPNETKHIFDEISVKEVAVHDIWKRIQAADSQIQSYIKSHGSLTPHPKEDALYSTIREEYQKAINIQNEKVQLADRARLGLTRHIKRLDDRLAKAGHGFTAAELLNAPDYYASSPYGGYSPSGASSARQTPAPSRSGASTAGRRRTSATTRGAIQNGVYHSPYTASLADSGSTRGQKVSNATATTQLETKADSTTPNEMVSEEDMEEDNEKYCFCQQGSYGQMVACDNANCEREWFHMECVGLKAPPEGTWYCEACRDQKLVDAK</sequence>
<comment type="function">
    <text evidence="5">Component of a histone deacetylase complex responsible for the deacetylation of lysine residues on the N-terminal part of the core histones (H2A, H2B, H3 and H4). Histone deacetylation gives a tag for epigenetic repression and plays an important role in transcriptional regulation, cell cycle progression and developmental events. Has a role in silencing of mating type genes.</text>
</comment>
<comment type="subunit">
    <text evidence="1">Interacts with H3K4me3 and to a lesser extent with H3K4me2 (By similarity). Component of a histone deacetylase complex.</text>
</comment>
<comment type="subcellular location">
    <subcellularLocation>
        <location evidence="1">Nucleus</location>
    </subcellularLocation>
</comment>
<comment type="domain">
    <text evidence="1">The PHD-type zinc finger mediates the binding to H3K4me3.</text>
</comment>
<comment type="similarity">
    <text evidence="6">Belongs to the ING family.</text>
</comment>
<accession>O42871</accession>
<protein>
    <recommendedName>
        <fullName>Chromatin modification-related protein png1</fullName>
    </recommendedName>
    <alternativeName>
        <fullName>ING1 homolog 1</fullName>
    </alternativeName>
</protein>
<dbReference type="EMBL" id="CU329670">
    <property type="protein sequence ID" value="CAA15917.1"/>
    <property type="molecule type" value="Genomic_DNA"/>
</dbReference>
<dbReference type="PIR" id="T11644">
    <property type="entry name" value="T11644"/>
</dbReference>
<dbReference type="RefSeq" id="NP_594080.1">
    <property type="nucleotide sequence ID" value="NM_001019505.2"/>
</dbReference>
<dbReference type="SMR" id="O42871"/>
<dbReference type="BioGRID" id="279874">
    <property type="interactions" value="7"/>
</dbReference>
<dbReference type="FunCoup" id="O42871">
    <property type="interactions" value="166"/>
</dbReference>
<dbReference type="IntAct" id="O42871">
    <property type="interactions" value="1"/>
</dbReference>
<dbReference type="MINT" id="O42871"/>
<dbReference type="STRING" id="284812.O42871"/>
<dbReference type="iPTMnet" id="O42871"/>
<dbReference type="PaxDb" id="4896-SPAC3G9.08.1"/>
<dbReference type="EnsemblFungi" id="SPAC3G9.08.1">
    <property type="protein sequence ID" value="SPAC3G9.08.1:pep"/>
    <property type="gene ID" value="SPAC3G9.08"/>
</dbReference>
<dbReference type="GeneID" id="2543454"/>
<dbReference type="KEGG" id="spo:2543454"/>
<dbReference type="PomBase" id="SPAC3G9.08">
    <property type="gene designation" value="png1"/>
</dbReference>
<dbReference type="VEuPathDB" id="FungiDB:SPAC3G9.08"/>
<dbReference type="eggNOG" id="KOG1973">
    <property type="taxonomic scope" value="Eukaryota"/>
</dbReference>
<dbReference type="HOGENOM" id="CLU_031900_2_0_1"/>
<dbReference type="InParanoid" id="O42871"/>
<dbReference type="OMA" id="YCYCQKL"/>
<dbReference type="PhylomeDB" id="O42871"/>
<dbReference type="Reactome" id="R-SPO-3214847">
    <property type="pathway name" value="HATs acetylate histones"/>
</dbReference>
<dbReference type="Reactome" id="R-SPO-3899300">
    <property type="pathway name" value="SUMOylation of transcription cofactors"/>
</dbReference>
<dbReference type="Reactome" id="R-SPO-6804758">
    <property type="pathway name" value="Regulation of TP53 Activity through Acetylation"/>
</dbReference>
<dbReference type="Reactome" id="R-SPO-6811555">
    <property type="pathway name" value="PI5P Regulates TP53 Acetylation"/>
</dbReference>
<dbReference type="PRO" id="PR:O42871"/>
<dbReference type="Proteomes" id="UP000002485">
    <property type="component" value="Chromosome I"/>
</dbReference>
<dbReference type="GO" id="GO:0035267">
    <property type="term" value="C:NuA4 histone acetyltransferase complex"/>
    <property type="evidence" value="ECO:0000314"/>
    <property type="project" value="PomBase"/>
</dbReference>
<dbReference type="GO" id="GO:0005634">
    <property type="term" value="C:nucleus"/>
    <property type="evidence" value="ECO:0000314"/>
    <property type="project" value="PomBase"/>
</dbReference>
<dbReference type="GO" id="GO:0035064">
    <property type="term" value="F:methylated histone binding"/>
    <property type="evidence" value="ECO:0000318"/>
    <property type="project" value="GO_Central"/>
</dbReference>
<dbReference type="GO" id="GO:0008270">
    <property type="term" value="F:zinc ion binding"/>
    <property type="evidence" value="ECO:0007669"/>
    <property type="project" value="UniProtKB-KW"/>
</dbReference>
<dbReference type="GO" id="GO:0140861">
    <property type="term" value="P:DNA repair-dependent chromatin remodeling"/>
    <property type="evidence" value="ECO:0000305"/>
    <property type="project" value="PomBase"/>
</dbReference>
<dbReference type="GO" id="GO:0006355">
    <property type="term" value="P:regulation of DNA-templated transcription"/>
    <property type="evidence" value="ECO:0000318"/>
    <property type="project" value="GO_Central"/>
</dbReference>
<dbReference type="CDD" id="cd16858">
    <property type="entry name" value="ING_ING3_Yng2p"/>
    <property type="match status" value="1"/>
</dbReference>
<dbReference type="CDD" id="cd15505">
    <property type="entry name" value="PHD_ING"/>
    <property type="match status" value="1"/>
</dbReference>
<dbReference type="Gene3D" id="6.10.140.1740">
    <property type="match status" value="1"/>
</dbReference>
<dbReference type="Gene3D" id="3.30.40.10">
    <property type="entry name" value="Zinc/RING finger domain, C3HC4 (zinc finger)"/>
    <property type="match status" value="1"/>
</dbReference>
<dbReference type="InterPro" id="IPR028651">
    <property type="entry name" value="ING_fam"/>
</dbReference>
<dbReference type="InterPro" id="IPR024610">
    <property type="entry name" value="ING_N_histone-binding"/>
</dbReference>
<dbReference type="InterPro" id="IPR019786">
    <property type="entry name" value="Zinc_finger_PHD-type_CS"/>
</dbReference>
<dbReference type="InterPro" id="IPR011011">
    <property type="entry name" value="Znf_FYVE_PHD"/>
</dbReference>
<dbReference type="InterPro" id="IPR001965">
    <property type="entry name" value="Znf_PHD"/>
</dbReference>
<dbReference type="InterPro" id="IPR019787">
    <property type="entry name" value="Znf_PHD-finger"/>
</dbReference>
<dbReference type="InterPro" id="IPR013083">
    <property type="entry name" value="Znf_RING/FYVE/PHD"/>
</dbReference>
<dbReference type="PANTHER" id="PTHR10333:SF104">
    <property type="entry name" value="CHROMATIN MODIFICATION-RELATED PROTEIN PNG1"/>
    <property type="match status" value="1"/>
</dbReference>
<dbReference type="PANTHER" id="PTHR10333">
    <property type="entry name" value="INHIBITOR OF GROWTH PROTEIN"/>
    <property type="match status" value="1"/>
</dbReference>
<dbReference type="Pfam" id="PF12998">
    <property type="entry name" value="ING"/>
    <property type="match status" value="1"/>
</dbReference>
<dbReference type="SMART" id="SM01408">
    <property type="entry name" value="ING"/>
    <property type="match status" value="1"/>
</dbReference>
<dbReference type="SMART" id="SM00249">
    <property type="entry name" value="PHD"/>
    <property type="match status" value="1"/>
</dbReference>
<dbReference type="SUPFAM" id="SSF57903">
    <property type="entry name" value="FYVE/PHD zinc finger"/>
    <property type="match status" value="1"/>
</dbReference>
<dbReference type="PROSITE" id="PS01359">
    <property type="entry name" value="ZF_PHD_1"/>
    <property type="match status" value="1"/>
</dbReference>
<dbReference type="PROSITE" id="PS50016">
    <property type="entry name" value="ZF_PHD_2"/>
    <property type="match status" value="1"/>
</dbReference>